<dbReference type="EMBL" id="CP000029">
    <property type="protein sequence ID" value="AAW54164.1"/>
    <property type="molecule type" value="Genomic_DNA"/>
</dbReference>
<dbReference type="RefSeq" id="WP_002456225.1">
    <property type="nucleotide sequence ID" value="NC_002976.3"/>
</dbReference>
<dbReference type="SMR" id="Q5HPU0"/>
<dbReference type="STRING" id="176279.SERP0818"/>
<dbReference type="GeneID" id="50018936"/>
<dbReference type="KEGG" id="ser:SERP0818"/>
<dbReference type="eggNOG" id="COG4974">
    <property type="taxonomic scope" value="Bacteria"/>
</dbReference>
<dbReference type="HOGENOM" id="CLU_027562_9_0_9"/>
<dbReference type="Proteomes" id="UP000000531">
    <property type="component" value="Chromosome"/>
</dbReference>
<dbReference type="GO" id="GO:0005737">
    <property type="term" value="C:cytoplasm"/>
    <property type="evidence" value="ECO:0007669"/>
    <property type="project" value="UniProtKB-SubCell"/>
</dbReference>
<dbReference type="GO" id="GO:0003677">
    <property type="term" value="F:DNA binding"/>
    <property type="evidence" value="ECO:0007669"/>
    <property type="project" value="UniProtKB-KW"/>
</dbReference>
<dbReference type="GO" id="GO:0009037">
    <property type="term" value="F:tyrosine-based site-specific recombinase activity"/>
    <property type="evidence" value="ECO:0007669"/>
    <property type="project" value="UniProtKB-UniRule"/>
</dbReference>
<dbReference type="GO" id="GO:0051301">
    <property type="term" value="P:cell division"/>
    <property type="evidence" value="ECO:0007669"/>
    <property type="project" value="UniProtKB-KW"/>
</dbReference>
<dbReference type="GO" id="GO:0007059">
    <property type="term" value="P:chromosome segregation"/>
    <property type="evidence" value="ECO:0007669"/>
    <property type="project" value="UniProtKB-UniRule"/>
</dbReference>
<dbReference type="GO" id="GO:0006313">
    <property type="term" value="P:DNA transposition"/>
    <property type="evidence" value="ECO:0007669"/>
    <property type="project" value="UniProtKB-UniRule"/>
</dbReference>
<dbReference type="CDD" id="cd00798">
    <property type="entry name" value="INT_XerDC_C"/>
    <property type="match status" value="1"/>
</dbReference>
<dbReference type="Gene3D" id="1.10.150.130">
    <property type="match status" value="1"/>
</dbReference>
<dbReference type="Gene3D" id="1.10.443.10">
    <property type="entry name" value="Intergrase catalytic core"/>
    <property type="match status" value="1"/>
</dbReference>
<dbReference type="HAMAP" id="MF_01808">
    <property type="entry name" value="Recomb_XerC_XerD"/>
    <property type="match status" value="1"/>
</dbReference>
<dbReference type="InterPro" id="IPR044068">
    <property type="entry name" value="CB"/>
</dbReference>
<dbReference type="InterPro" id="IPR011010">
    <property type="entry name" value="DNA_brk_join_enz"/>
</dbReference>
<dbReference type="InterPro" id="IPR013762">
    <property type="entry name" value="Integrase-like_cat_sf"/>
</dbReference>
<dbReference type="InterPro" id="IPR002104">
    <property type="entry name" value="Integrase_catalytic"/>
</dbReference>
<dbReference type="InterPro" id="IPR010998">
    <property type="entry name" value="Integrase_recombinase_N"/>
</dbReference>
<dbReference type="InterPro" id="IPR004107">
    <property type="entry name" value="Integrase_SAM-like_N"/>
</dbReference>
<dbReference type="InterPro" id="IPR011931">
    <property type="entry name" value="Recomb_XerC"/>
</dbReference>
<dbReference type="InterPro" id="IPR023009">
    <property type="entry name" value="Tyrosine_recombinase_XerC/XerD"/>
</dbReference>
<dbReference type="InterPro" id="IPR050090">
    <property type="entry name" value="Tyrosine_recombinase_XerCD"/>
</dbReference>
<dbReference type="NCBIfam" id="NF001399">
    <property type="entry name" value="PRK00283.1"/>
    <property type="match status" value="1"/>
</dbReference>
<dbReference type="NCBIfam" id="NF040815">
    <property type="entry name" value="recomb_XerA_Arch"/>
    <property type="match status" value="1"/>
</dbReference>
<dbReference type="NCBIfam" id="TIGR02224">
    <property type="entry name" value="recomb_XerC"/>
    <property type="match status" value="1"/>
</dbReference>
<dbReference type="PANTHER" id="PTHR30349">
    <property type="entry name" value="PHAGE INTEGRASE-RELATED"/>
    <property type="match status" value="1"/>
</dbReference>
<dbReference type="PANTHER" id="PTHR30349:SF77">
    <property type="entry name" value="TYROSINE RECOMBINASE XERC"/>
    <property type="match status" value="1"/>
</dbReference>
<dbReference type="Pfam" id="PF02899">
    <property type="entry name" value="Phage_int_SAM_1"/>
    <property type="match status" value="1"/>
</dbReference>
<dbReference type="Pfam" id="PF00589">
    <property type="entry name" value="Phage_integrase"/>
    <property type="match status" value="1"/>
</dbReference>
<dbReference type="SUPFAM" id="SSF56349">
    <property type="entry name" value="DNA breaking-rejoining enzymes"/>
    <property type="match status" value="1"/>
</dbReference>
<dbReference type="SUPFAM" id="SSF47823">
    <property type="entry name" value="lambda integrase-like, N-terminal domain"/>
    <property type="match status" value="1"/>
</dbReference>
<dbReference type="PROSITE" id="PS51900">
    <property type="entry name" value="CB"/>
    <property type="match status" value="1"/>
</dbReference>
<dbReference type="PROSITE" id="PS51898">
    <property type="entry name" value="TYR_RECOMBINASE"/>
    <property type="match status" value="1"/>
</dbReference>
<gene>
    <name evidence="1" type="primary">xerC</name>
    <name type="ordered locus">SERP0818</name>
</gene>
<comment type="function">
    <text evidence="1">Site-specific tyrosine recombinase, which acts by catalyzing the cutting and rejoining of the recombining DNA molecules. The XerC-XerD complex is essential to convert dimers of the bacterial chromosome into monomers to permit their segregation at cell division. It also contributes to the segregational stability of plasmids.</text>
</comment>
<comment type="subunit">
    <text evidence="1">Forms a cyclic heterotetrameric complex composed of two molecules of XerC and two molecules of XerD.</text>
</comment>
<comment type="subcellular location">
    <subcellularLocation>
        <location evidence="1">Cytoplasm</location>
    </subcellularLocation>
</comment>
<comment type="similarity">
    <text evidence="1">Belongs to the 'phage' integrase family. XerC subfamily.</text>
</comment>
<organism>
    <name type="scientific">Staphylococcus epidermidis (strain ATCC 35984 / DSM 28319 / BCRC 17069 / CCUG 31568 / BM 3577 / RP62A)</name>
    <dbReference type="NCBI Taxonomy" id="176279"/>
    <lineage>
        <taxon>Bacteria</taxon>
        <taxon>Bacillati</taxon>
        <taxon>Bacillota</taxon>
        <taxon>Bacilli</taxon>
        <taxon>Bacillales</taxon>
        <taxon>Staphylococcaceae</taxon>
        <taxon>Staphylococcus</taxon>
    </lineage>
</organism>
<sequence>MDKIQETFLYMLKVERNFSEYTLKSYHDDLVQFNNFLEREHLQLETFEYKDARNYLAFLYSNQLKRTTVSRKISTLRTFYEFWMTQDNSIINPFVQLVHPKKEKYLPQFFYEEEMEALFQTVEHDNKKGIRDKVIIELLYATGIRVSELINIKLKDIDMNLPGVKVLGKGNKERFIPFGEFCRQSIERYLEEFQPKQLANHDYLIVNMKGDPITERGVRYVLNDVVKRTAGVNDIHPHKLRHTFATHLLNQGADLRTVQSLLGHVNLSTTGRYTHVSNQQLRKVYLNAHPRAKKGE</sequence>
<reference key="1">
    <citation type="journal article" date="2005" name="J. Bacteriol.">
        <title>Insights on evolution of virulence and resistance from the complete genome analysis of an early methicillin-resistant Staphylococcus aureus strain and a biofilm-producing methicillin-resistant Staphylococcus epidermidis strain.</title>
        <authorList>
            <person name="Gill S.R."/>
            <person name="Fouts D.E."/>
            <person name="Archer G.L."/>
            <person name="Mongodin E.F."/>
            <person name="DeBoy R.T."/>
            <person name="Ravel J."/>
            <person name="Paulsen I.T."/>
            <person name="Kolonay J.F."/>
            <person name="Brinkac L.M."/>
            <person name="Beanan M.J."/>
            <person name="Dodson R.J."/>
            <person name="Daugherty S.C."/>
            <person name="Madupu R."/>
            <person name="Angiuoli S.V."/>
            <person name="Durkin A.S."/>
            <person name="Haft D.H."/>
            <person name="Vamathevan J.J."/>
            <person name="Khouri H."/>
            <person name="Utterback T.R."/>
            <person name="Lee C."/>
            <person name="Dimitrov G."/>
            <person name="Jiang L."/>
            <person name="Qin H."/>
            <person name="Weidman J."/>
            <person name="Tran K."/>
            <person name="Kang K.H."/>
            <person name="Hance I.R."/>
            <person name="Nelson K.E."/>
            <person name="Fraser C.M."/>
        </authorList>
    </citation>
    <scope>NUCLEOTIDE SEQUENCE [LARGE SCALE GENOMIC DNA]</scope>
    <source>
        <strain>ATCC 35984 / DSM 28319 / BCRC 17069 / CCUG 31568 / BM 3577 / RP62A</strain>
    </source>
</reference>
<keyword id="KW-0131">Cell cycle</keyword>
<keyword id="KW-0132">Cell division</keyword>
<keyword id="KW-0159">Chromosome partition</keyword>
<keyword id="KW-0963">Cytoplasm</keyword>
<keyword id="KW-0229">DNA integration</keyword>
<keyword id="KW-0233">DNA recombination</keyword>
<keyword id="KW-0238">DNA-binding</keyword>
<keyword id="KW-1185">Reference proteome</keyword>
<proteinExistence type="inferred from homology"/>
<feature type="chain" id="PRO_0000095337" description="Tyrosine recombinase XerC">
    <location>
        <begin position="1"/>
        <end position="296"/>
    </location>
</feature>
<feature type="domain" description="Core-binding (CB)" evidence="3">
    <location>
        <begin position="1"/>
        <end position="84"/>
    </location>
</feature>
<feature type="domain" description="Tyr recombinase" evidence="2">
    <location>
        <begin position="105"/>
        <end position="286"/>
    </location>
</feature>
<feature type="active site" evidence="1">
    <location>
        <position position="145"/>
    </location>
</feature>
<feature type="active site" evidence="1">
    <location>
        <position position="169"/>
    </location>
</feature>
<feature type="active site" evidence="1">
    <location>
        <position position="238"/>
    </location>
</feature>
<feature type="active site" evidence="1">
    <location>
        <position position="241"/>
    </location>
</feature>
<feature type="active site" evidence="1">
    <location>
        <position position="264"/>
    </location>
</feature>
<feature type="active site" description="O-(3'-phospho-DNA)-tyrosine intermediate" evidence="1">
    <location>
        <position position="273"/>
    </location>
</feature>
<evidence type="ECO:0000255" key="1">
    <source>
        <dbReference type="HAMAP-Rule" id="MF_01808"/>
    </source>
</evidence>
<evidence type="ECO:0000255" key="2">
    <source>
        <dbReference type="PROSITE-ProRule" id="PRU01246"/>
    </source>
</evidence>
<evidence type="ECO:0000255" key="3">
    <source>
        <dbReference type="PROSITE-ProRule" id="PRU01248"/>
    </source>
</evidence>
<accession>Q5HPU0</accession>
<name>XERC_STAEQ</name>
<protein>
    <recommendedName>
        <fullName evidence="1">Tyrosine recombinase XerC</fullName>
    </recommendedName>
</protein>